<gene>
    <name evidence="1" type="primary">glyA</name>
    <name type="ordered locus">MAV_1215</name>
</gene>
<protein>
    <recommendedName>
        <fullName evidence="1">Serine hydroxymethyltransferase</fullName>
        <shortName evidence="1">SHMT</shortName>
        <shortName evidence="1">Serine methylase</shortName>
        <ecNumber evidence="1">2.1.2.1</ecNumber>
    </recommendedName>
</protein>
<evidence type="ECO:0000255" key="1">
    <source>
        <dbReference type="HAMAP-Rule" id="MF_00051"/>
    </source>
</evidence>
<evidence type="ECO:0000305" key="2"/>
<dbReference type="EC" id="2.1.2.1" evidence="1"/>
<dbReference type="EMBL" id="CP000479">
    <property type="protein sequence ID" value="ABK67885.1"/>
    <property type="status" value="ALT_INIT"/>
    <property type="molecule type" value="Genomic_DNA"/>
</dbReference>
<dbReference type="RefSeq" id="WP_031348075.1">
    <property type="nucleotide sequence ID" value="NC_008595.1"/>
</dbReference>
<dbReference type="SMR" id="A0QC23"/>
<dbReference type="KEGG" id="mav:MAV_1215"/>
<dbReference type="HOGENOM" id="CLU_022477_2_1_11"/>
<dbReference type="UniPathway" id="UPA00193"/>
<dbReference type="UniPathway" id="UPA00288">
    <property type="reaction ID" value="UER01023"/>
</dbReference>
<dbReference type="Proteomes" id="UP000001574">
    <property type="component" value="Chromosome"/>
</dbReference>
<dbReference type="GO" id="GO:0005829">
    <property type="term" value="C:cytosol"/>
    <property type="evidence" value="ECO:0007669"/>
    <property type="project" value="TreeGrafter"/>
</dbReference>
<dbReference type="GO" id="GO:0004372">
    <property type="term" value="F:glycine hydroxymethyltransferase activity"/>
    <property type="evidence" value="ECO:0007669"/>
    <property type="project" value="UniProtKB-UniRule"/>
</dbReference>
<dbReference type="GO" id="GO:0030170">
    <property type="term" value="F:pyridoxal phosphate binding"/>
    <property type="evidence" value="ECO:0007669"/>
    <property type="project" value="UniProtKB-UniRule"/>
</dbReference>
<dbReference type="GO" id="GO:0019264">
    <property type="term" value="P:glycine biosynthetic process from serine"/>
    <property type="evidence" value="ECO:0007669"/>
    <property type="project" value="UniProtKB-UniRule"/>
</dbReference>
<dbReference type="GO" id="GO:0035999">
    <property type="term" value="P:tetrahydrofolate interconversion"/>
    <property type="evidence" value="ECO:0007669"/>
    <property type="project" value="UniProtKB-UniRule"/>
</dbReference>
<dbReference type="CDD" id="cd00378">
    <property type="entry name" value="SHMT"/>
    <property type="match status" value="1"/>
</dbReference>
<dbReference type="FunFam" id="3.40.640.10:FF:000001">
    <property type="entry name" value="Serine hydroxymethyltransferase"/>
    <property type="match status" value="1"/>
</dbReference>
<dbReference type="Gene3D" id="3.90.1150.10">
    <property type="entry name" value="Aspartate Aminotransferase, domain 1"/>
    <property type="match status" value="1"/>
</dbReference>
<dbReference type="Gene3D" id="3.40.640.10">
    <property type="entry name" value="Type I PLP-dependent aspartate aminotransferase-like (Major domain)"/>
    <property type="match status" value="1"/>
</dbReference>
<dbReference type="HAMAP" id="MF_00051">
    <property type="entry name" value="SHMT"/>
    <property type="match status" value="1"/>
</dbReference>
<dbReference type="InterPro" id="IPR015424">
    <property type="entry name" value="PyrdxlP-dep_Trfase"/>
</dbReference>
<dbReference type="InterPro" id="IPR015421">
    <property type="entry name" value="PyrdxlP-dep_Trfase_major"/>
</dbReference>
<dbReference type="InterPro" id="IPR015422">
    <property type="entry name" value="PyrdxlP-dep_Trfase_small"/>
</dbReference>
<dbReference type="InterPro" id="IPR001085">
    <property type="entry name" value="Ser_HO-MeTrfase"/>
</dbReference>
<dbReference type="InterPro" id="IPR049943">
    <property type="entry name" value="Ser_HO-MeTrfase-like"/>
</dbReference>
<dbReference type="InterPro" id="IPR019798">
    <property type="entry name" value="Ser_HO-MeTrfase_PLP_BS"/>
</dbReference>
<dbReference type="InterPro" id="IPR039429">
    <property type="entry name" value="SHMT-like_dom"/>
</dbReference>
<dbReference type="NCBIfam" id="NF000586">
    <property type="entry name" value="PRK00011.1"/>
    <property type="match status" value="1"/>
</dbReference>
<dbReference type="PANTHER" id="PTHR11680">
    <property type="entry name" value="SERINE HYDROXYMETHYLTRANSFERASE"/>
    <property type="match status" value="1"/>
</dbReference>
<dbReference type="PANTHER" id="PTHR11680:SF35">
    <property type="entry name" value="SERINE HYDROXYMETHYLTRANSFERASE 1"/>
    <property type="match status" value="1"/>
</dbReference>
<dbReference type="Pfam" id="PF00464">
    <property type="entry name" value="SHMT"/>
    <property type="match status" value="1"/>
</dbReference>
<dbReference type="PIRSF" id="PIRSF000412">
    <property type="entry name" value="SHMT"/>
    <property type="match status" value="1"/>
</dbReference>
<dbReference type="SUPFAM" id="SSF53383">
    <property type="entry name" value="PLP-dependent transferases"/>
    <property type="match status" value="1"/>
</dbReference>
<dbReference type="PROSITE" id="PS00096">
    <property type="entry name" value="SHMT"/>
    <property type="match status" value="1"/>
</dbReference>
<accession>A0QC23</accession>
<reference key="1">
    <citation type="submission" date="2006-10" db="EMBL/GenBank/DDBJ databases">
        <authorList>
            <person name="Fleischmann R.D."/>
            <person name="Dodson R.J."/>
            <person name="Haft D.H."/>
            <person name="Merkel J.S."/>
            <person name="Nelson W.C."/>
            <person name="Fraser C.M."/>
        </authorList>
    </citation>
    <scope>NUCLEOTIDE SEQUENCE [LARGE SCALE GENOMIC DNA]</scope>
    <source>
        <strain>104</strain>
    </source>
</reference>
<name>GLYA_MYCA1</name>
<organism>
    <name type="scientific">Mycobacterium avium (strain 104)</name>
    <dbReference type="NCBI Taxonomy" id="243243"/>
    <lineage>
        <taxon>Bacteria</taxon>
        <taxon>Bacillati</taxon>
        <taxon>Actinomycetota</taxon>
        <taxon>Actinomycetes</taxon>
        <taxon>Mycobacteriales</taxon>
        <taxon>Mycobacteriaceae</taxon>
        <taxon>Mycobacterium</taxon>
        <taxon>Mycobacterium avium complex (MAC)</taxon>
    </lineage>
</organism>
<comment type="function">
    <text evidence="1">Catalyzes the reversible interconversion of serine and glycine with tetrahydrofolate (THF) serving as the one-carbon carrier. This reaction serves as the major source of one-carbon groups required for the biosynthesis of purines, thymidylate, methionine, and other important biomolecules. Also exhibits THF-independent aldolase activity toward beta-hydroxyamino acids, producing glycine and aldehydes, via a retro-aldol mechanism.</text>
</comment>
<comment type="catalytic activity">
    <reaction evidence="1">
        <text>(6R)-5,10-methylene-5,6,7,8-tetrahydrofolate + glycine + H2O = (6S)-5,6,7,8-tetrahydrofolate + L-serine</text>
        <dbReference type="Rhea" id="RHEA:15481"/>
        <dbReference type="ChEBI" id="CHEBI:15377"/>
        <dbReference type="ChEBI" id="CHEBI:15636"/>
        <dbReference type="ChEBI" id="CHEBI:33384"/>
        <dbReference type="ChEBI" id="CHEBI:57305"/>
        <dbReference type="ChEBI" id="CHEBI:57453"/>
        <dbReference type="EC" id="2.1.2.1"/>
    </reaction>
</comment>
<comment type="cofactor">
    <cofactor evidence="1">
        <name>pyridoxal 5'-phosphate</name>
        <dbReference type="ChEBI" id="CHEBI:597326"/>
    </cofactor>
</comment>
<comment type="pathway">
    <text evidence="1">One-carbon metabolism; tetrahydrofolate interconversion.</text>
</comment>
<comment type="pathway">
    <text evidence="1">Amino-acid biosynthesis; glycine biosynthesis; glycine from L-serine: step 1/1.</text>
</comment>
<comment type="subunit">
    <text evidence="1">Homodimer.</text>
</comment>
<comment type="subcellular location">
    <subcellularLocation>
        <location evidence="1">Cytoplasm</location>
    </subcellularLocation>
</comment>
<comment type="similarity">
    <text evidence="1">Belongs to the SHMT family.</text>
</comment>
<comment type="sequence caution" evidence="2">
    <conflict type="erroneous initiation">
        <sequence resource="EMBL-CDS" id="ABK67885"/>
    </conflict>
</comment>
<keyword id="KW-0028">Amino-acid biosynthesis</keyword>
<keyword id="KW-0963">Cytoplasm</keyword>
<keyword id="KW-0554">One-carbon metabolism</keyword>
<keyword id="KW-0663">Pyridoxal phosphate</keyword>
<keyword id="KW-0808">Transferase</keyword>
<proteinExistence type="inferred from homology"/>
<sequence>MSAPLADIDPDIAGLLGQELGRQRDTLEMIASENFVPRAVLQAQGSVLTNKYAEGLPGRRYYGGCEYVDVVENIARDRAKALFGADFANVQPHSGAQANAAVLHALMTPGERLLGLDLANGGHLTHGMKLNFSGKLYDVGFYGVDPTTHLIDMDAVRAKALEFRPKVIIAGWSAYPRVLDFAAFASIADEVGAKLWVDMAHFAGLVAAGLHPSPVPHADVVSTTVHKTLGGPRSGLILGKQEYAKSINSAVFPGQQGGPLMHVIAAKAVALKIAGTEEFADRQRRTLSGARILAERLSGADVAAAGVSVVSGGTDVHLVLVDLRNSELDGQAAEDLLHEIGITVNRNAVPNDPRPPMVTSGLRVGTPALATRGFGDAEFSEVADVIATALAGGRGADLAALRDRVTRLARDFPLYEGLEDWALVGR</sequence>
<feature type="chain" id="PRO_0000369939" description="Serine hydroxymethyltransferase">
    <location>
        <begin position="1"/>
        <end position="426"/>
    </location>
</feature>
<feature type="binding site" evidence="1">
    <location>
        <position position="118"/>
    </location>
    <ligand>
        <name>(6S)-5,6,7,8-tetrahydrofolate</name>
        <dbReference type="ChEBI" id="CHEBI:57453"/>
    </ligand>
</feature>
<feature type="binding site" evidence="1">
    <location>
        <begin position="122"/>
        <end position="124"/>
    </location>
    <ligand>
        <name>(6S)-5,6,7,8-tetrahydrofolate</name>
        <dbReference type="ChEBI" id="CHEBI:57453"/>
    </ligand>
</feature>
<feature type="site" description="Plays an important role in substrate specificity" evidence="1">
    <location>
        <position position="226"/>
    </location>
</feature>
<feature type="modified residue" description="N6-(pyridoxal phosphate)lysine" evidence="1">
    <location>
        <position position="227"/>
    </location>
</feature>